<reference key="1">
    <citation type="journal article" date="1997" name="Nature">
        <title>The complete genome sequence of the hyperthermophilic, sulphate-reducing archaeon Archaeoglobus fulgidus.</title>
        <authorList>
            <person name="Klenk H.-P."/>
            <person name="Clayton R.A."/>
            <person name="Tomb J.-F."/>
            <person name="White O."/>
            <person name="Nelson K.E."/>
            <person name="Ketchum K.A."/>
            <person name="Dodson R.J."/>
            <person name="Gwinn M.L."/>
            <person name="Hickey E.K."/>
            <person name="Peterson J.D."/>
            <person name="Richardson D.L."/>
            <person name="Kerlavage A.R."/>
            <person name="Graham D.E."/>
            <person name="Kyrpides N.C."/>
            <person name="Fleischmann R.D."/>
            <person name="Quackenbush J."/>
            <person name="Lee N.H."/>
            <person name="Sutton G.G."/>
            <person name="Gill S.R."/>
            <person name="Kirkness E.F."/>
            <person name="Dougherty B.A."/>
            <person name="McKenney K."/>
            <person name="Adams M.D."/>
            <person name="Loftus B.J."/>
            <person name="Peterson S.N."/>
            <person name="Reich C.I."/>
            <person name="McNeil L.K."/>
            <person name="Badger J.H."/>
            <person name="Glodek A."/>
            <person name="Zhou L."/>
            <person name="Overbeek R."/>
            <person name="Gocayne J.D."/>
            <person name="Weidman J.F."/>
            <person name="McDonald L.A."/>
            <person name="Utterback T.R."/>
            <person name="Cotton M.D."/>
            <person name="Spriggs T."/>
            <person name="Artiach P."/>
            <person name="Kaine B.P."/>
            <person name="Sykes S.M."/>
            <person name="Sadow P.W."/>
            <person name="D'Andrea K.P."/>
            <person name="Bowman C."/>
            <person name="Fujii C."/>
            <person name="Garland S.A."/>
            <person name="Mason T.M."/>
            <person name="Olsen G.J."/>
            <person name="Fraser C.M."/>
            <person name="Smith H.O."/>
            <person name="Woese C.R."/>
            <person name="Venter J.C."/>
        </authorList>
    </citation>
    <scope>NUCLEOTIDE SEQUENCE [LARGE SCALE GENOMIC DNA]</scope>
    <source>
        <strain>ATCC 49558 / DSM 4304 / JCM 9628 / NBRC 100126 / VC-16</strain>
    </source>
</reference>
<sequence length="471" mass="54521">MTLPSKENFSEWYHEVIQTAEIMDVRYPVKGLYVWFPFGFKIRQLVYSKLREIMDREHDEVYFPALIPETELGKEGEHIKGFEDEVYWITHGGLTPLDVKLALRPTSETAMYPMFRLWVRNHADLPLKVYQIVNTFRYETKHTRPLIRLREITSFKEAHTVHKDFEEAAEHVKKAIGFYKEFYDFLAIPYMVIRRPEWDKFPGAAYTIAFDTIMPDGRTLQIGTVHHLADNFARTFDIKYEAPNGEHYYAHQTCYGISERCIAALISVHGDDLGLVLPFEVAPVQIVIIPILYKGKEEAVMEACRKLAEKLKAFRVVLDEGEDRPGAKYYKWELKGVPIRFEIGPRDAEKGVAVVSFRDEKRKFEVPLDEVDEGKVLEWARELKQRLRNAAAERMAEKVKFVENTGEIEEWGGVVAVYLCSDEDCGHSVEEHGKSLLGWFEEVPDWLDLEPEGKCVVCGREGRLAALAKTY</sequence>
<keyword id="KW-0030">Aminoacyl-tRNA synthetase</keyword>
<keyword id="KW-0067">ATP-binding</keyword>
<keyword id="KW-0963">Cytoplasm</keyword>
<keyword id="KW-0436">Ligase</keyword>
<keyword id="KW-0547">Nucleotide-binding</keyword>
<keyword id="KW-0648">Protein biosynthesis</keyword>
<keyword id="KW-1185">Reference proteome</keyword>
<dbReference type="EC" id="6.1.1.15" evidence="1"/>
<dbReference type="EMBL" id="AE000782">
    <property type="protein sequence ID" value="AAB89637.1"/>
    <property type="status" value="ALT_INIT"/>
    <property type="molecule type" value="Genomic_DNA"/>
</dbReference>
<dbReference type="PIR" id="H69450">
    <property type="entry name" value="H69450"/>
</dbReference>
<dbReference type="RefSeq" id="WP_048064425.1">
    <property type="nucleotide sequence ID" value="NC_000917.1"/>
</dbReference>
<dbReference type="SMR" id="O28664"/>
<dbReference type="STRING" id="224325.AF_1609"/>
<dbReference type="PaxDb" id="224325-AF_1609"/>
<dbReference type="DNASU" id="1484834"/>
<dbReference type="EnsemblBacteria" id="AAB89637">
    <property type="protein sequence ID" value="AAB89637"/>
    <property type="gene ID" value="AF_1609"/>
</dbReference>
<dbReference type="GeneID" id="24795355"/>
<dbReference type="KEGG" id="afu:AF_1609"/>
<dbReference type="eggNOG" id="arCOG00402">
    <property type="taxonomic scope" value="Archaea"/>
</dbReference>
<dbReference type="HOGENOM" id="CLU_001882_4_2_2"/>
<dbReference type="OrthoDB" id="7375at2157"/>
<dbReference type="PhylomeDB" id="O28664"/>
<dbReference type="Proteomes" id="UP000002199">
    <property type="component" value="Chromosome"/>
</dbReference>
<dbReference type="GO" id="GO:0017101">
    <property type="term" value="C:aminoacyl-tRNA synthetase multienzyme complex"/>
    <property type="evidence" value="ECO:0007669"/>
    <property type="project" value="TreeGrafter"/>
</dbReference>
<dbReference type="GO" id="GO:0005737">
    <property type="term" value="C:cytoplasm"/>
    <property type="evidence" value="ECO:0007669"/>
    <property type="project" value="UniProtKB-SubCell"/>
</dbReference>
<dbReference type="GO" id="GO:0005524">
    <property type="term" value="F:ATP binding"/>
    <property type="evidence" value="ECO:0007669"/>
    <property type="project" value="UniProtKB-UniRule"/>
</dbReference>
<dbReference type="GO" id="GO:0004827">
    <property type="term" value="F:proline-tRNA ligase activity"/>
    <property type="evidence" value="ECO:0007669"/>
    <property type="project" value="UniProtKB-UniRule"/>
</dbReference>
<dbReference type="GO" id="GO:0006433">
    <property type="term" value="P:prolyl-tRNA aminoacylation"/>
    <property type="evidence" value="ECO:0007669"/>
    <property type="project" value="UniProtKB-UniRule"/>
</dbReference>
<dbReference type="CDD" id="cd00862">
    <property type="entry name" value="ProRS_anticodon_zinc"/>
    <property type="match status" value="1"/>
</dbReference>
<dbReference type="CDD" id="cd00778">
    <property type="entry name" value="ProRS_core_arch_euk"/>
    <property type="match status" value="1"/>
</dbReference>
<dbReference type="FunFam" id="3.30.930.10:FF:000037">
    <property type="entry name" value="Proline--tRNA ligase"/>
    <property type="match status" value="1"/>
</dbReference>
<dbReference type="Gene3D" id="3.40.50.800">
    <property type="entry name" value="Anticodon-binding domain"/>
    <property type="match status" value="1"/>
</dbReference>
<dbReference type="Gene3D" id="3.30.930.10">
    <property type="entry name" value="Bira Bifunctional Protein, Domain 2"/>
    <property type="match status" value="1"/>
</dbReference>
<dbReference type="Gene3D" id="3.30.110.30">
    <property type="entry name" value="C-terminal domain of ProRS"/>
    <property type="match status" value="1"/>
</dbReference>
<dbReference type="HAMAP" id="MF_01571">
    <property type="entry name" value="Pro_tRNA_synth_type3"/>
    <property type="match status" value="1"/>
</dbReference>
<dbReference type="InterPro" id="IPR002314">
    <property type="entry name" value="aa-tRNA-synt_IIb"/>
</dbReference>
<dbReference type="InterPro" id="IPR006195">
    <property type="entry name" value="aa-tRNA-synth_II"/>
</dbReference>
<dbReference type="InterPro" id="IPR045864">
    <property type="entry name" value="aa-tRNA-synth_II/BPL/LPL"/>
</dbReference>
<dbReference type="InterPro" id="IPR004154">
    <property type="entry name" value="Anticodon-bd"/>
</dbReference>
<dbReference type="InterPro" id="IPR036621">
    <property type="entry name" value="Anticodon-bd_dom_sf"/>
</dbReference>
<dbReference type="InterPro" id="IPR002316">
    <property type="entry name" value="Pro-tRNA-ligase_IIa"/>
</dbReference>
<dbReference type="InterPro" id="IPR004499">
    <property type="entry name" value="Pro-tRNA-ligase_IIa_arc-type"/>
</dbReference>
<dbReference type="InterPro" id="IPR016061">
    <property type="entry name" value="Pro-tRNA_ligase_II_C"/>
</dbReference>
<dbReference type="InterPro" id="IPR017449">
    <property type="entry name" value="Pro-tRNA_synth_II"/>
</dbReference>
<dbReference type="InterPro" id="IPR033721">
    <property type="entry name" value="ProRS_core_arch_euk"/>
</dbReference>
<dbReference type="NCBIfam" id="TIGR00408">
    <property type="entry name" value="proS_fam_I"/>
    <property type="match status" value="1"/>
</dbReference>
<dbReference type="PANTHER" id="PTHR43382:SF2">
    <property type="entry name" value="BIFUNCTIONAL GLUTAMATE_PROLINE--TRNA LIGASE"/>
    <property type="match status" value="1"/>
</dbReference>
<dbReference type="PANTHER" id="PTHR43382">
    <property type="entry name" value="PROLYL-TRNA SYNTHETASE"/>
    <property type="match status" value="1"/>
</dbReference>
<dbReference type="Pfam" id="PF03129">
    <property type="entry name" value="HGTP_anticodon"/>
    <property type="match status" value="1"/>
</dbReference>
<dbReference type="Pfam" id="PF00587">
    <property type="entry name" value="tRNA-synt_2b"/>
    <property type="match status" value="1"/>
</dbReference>
<dbReference type="PRINTS" id="PR01046">
    <property type="entry name" value="TRNASYNTHPRO"/>
</dbReference>
<dbReference type="SMART" id="SM00946">
    <property type="entry name" value="ProRS-C_1"/>
    <property type="match status" value="1"/>
</dbReference>
<dbReference type="SUPFAM" id="SSF64586">
    <property type="entry name" value="C-terminal domain of ProRS"/>
    <property type="match status" value="1"/>
</dbReference>
<dbReference type="SUPFAM" id="SSF52954">
    <property type="entry name" value="Class II aaRS ABD-related"/>
    <property type="match status" value="1"/>
</dbReference>
<dbReference type="SUPFAM" id="SSF55681">
    <property type="entry name" value="Class II aaRS and biotin synthetases"/>
    <property type="match status" value="1"/>
</dbReference>
<dbReference type="PROSITE" id="PS50862">
    <property type="entry name" value="AA_TRNA_LIGASE_II"/>
    <property type="match status" value="1"/>
</dbReference>
<feature type="chain" id="PRO_0000139350" description="Proline--tRNA ligase">
    <location>
        <begin position="1"/>
        <end position="471"/>
    </location>
</feature>
<gene>
    <name evidence="1" type="primary">proS</name>
    <name type="ordered locus">AF_1609</name>
</gene>
<proteinExistence type="inferred from homology"/>
<comment type="function">
    <text evidence="1">Catalyzes the attachment of proline to tRNA(Pro) in a two-step reaction: proline is first activated by ATP to form Pro-AMP and then transferred to the acceptor end of tRNA(Pro).</text>
</comment>
<comment type="catalytic activity">
    <reaction evidence="1">
        <text>tRNA(Pro) + L-proline + ATP = L-prolyl-tRNA(Pro) + AMP + diphosphate</text>
        <dbReference type="Rhea" id="RHEA:14305"/>
        <dbReference type="Rhea" id="RHEA-COMP:9700"/>
        <dbReference type="Rhea" id="RHEA-COMP:9702"/>
        <dbReference type="ChEBI" id="CHEBI:30616"/>
        <dbReference type="ChEBI" id="CHEBI:33019"/>
        <dbReference type="ChEBI" id="CHEBI:60039"/>
        <dbReference type="ChEBI" id="CHEBI:78442"/>
        <dbReference type="ChEBI" id="CHEBI:78532"/>
        <dbReference type="ChEBI" id="CHEBI:456215"/>
        <dbReference type="EC" id="6.1.1.15"/>
    </reaction>
</comment>
<comment type="subunit">
    <text evidence="1">Homodimer.</text>
</comment>
<comment type="subcellular location">
    <subcellularLocation>
        <location evidence="1">Cytoplasm</location>
    </subcellularLocation>
</comment>
<comment type="domain">
    <text evidence="1">Consists of three domains: the N-terminal catalytic domain, the anticodon-binding domain and the C-terminal extension.</text>
</comment>
<comment type="similarity">
    <text evidence="1">Belongs to the class-II aminoacyl-tRNA synthetase family. ProS type 3 subfamily.</text>
</comment>
<comment type="sequence caution" evidence="2">
    <conflict type="erroneous initiation">
        <sequence resource="EMBL-CDS" id="AAB89637"/>
    </conflict>
</comment>
<protein>
    <recommendedName>
        <fullName evidence="1">Proline--tRNA ligase</fullName>
        <ecNumber evidence="1">6.1.1.15</ecNumber>
    </recommendedName>
    <alternativeName>
        <fullName evidence="1">Prolyl-tRNA synthetase</fullName>
        <shortName evidence="1">ProRS</shortName>
    </alternativeName>
</protein>
<evidence type="ECO:0000255" key="1">
    <source>
        <dbReference type="HAMAP-Rule" id="MF_01571"/>
    </source>
</evidence>
<evidence type="ECO:0000305" key="2"/>
<organism>
    <name type="scientific">Archaeoglobus fulgidus (strain ATCC 49558 / DSM 4304 / JCM 9628 / NBRC 100126 / VC-16)</name>
    <dbReference type="NCBI Taxonomy" id="224325"/>
    <lineage>
        <taxon>Archaea</taxon>
        <taxon>Methanobacteriati</taxon>
        <taxon>Methanobacteriota</taxon>
        <taxon>Archaeoglobi</taxon>
        <taxon>Archaeoglobales</taxon>
        <taxon>Archaeoglobaceae</taxon>
        <taxon>Archaeoglobus</taxon>
    </lineage>
</organism>
<name>SYP_ARCFU</name>
<accession>O28664</accession>